<organism>
    <name type="scientific">Mycobacterium tuberculosis (strain CDC 1551 / Oshkosh)</name>
    <dbReference type="NCBI Taxonomy" id="83331"/>
    <lineage>
        <taxon>Bacteria</taxon>
        <taxon>Bacillati</taxon>
        <taxon>Actinomycetota</taxon>
        <taxon>Actinomycetes</taxon>
        <taxon>Mycobacteriales</taxon>
        <taxon>Mycobacteriaceae</taxon>
        <taxon>Mycobacterium</taxon>
        <taxon>Mycobacterium tuberculosis complex</taxon>
    </lineage>
</organism>
<feature type="chain" id="PRO_0000426810" description="Aldo-keto reductase MT3049">
    <location>
        <begin position="1"/>
        <end position="282"/>
    </location>
</feature>
<feature type="active site" description="Proton donor" evidence="2">
    <location>
        <position position="57"/>
    </location>
</feature>
<feature type="binding site" evidence="1">
    <location>
        <position position="197"/>
    </location>
    <ligand>
        <name>NADPH</name>
        <dbReference type="ChEBI" id="CHEBI:57783"/>
    </ligand>
</feature>
<feature type="binding site" evidence="1">
    <location>
        <position position="235"/>
    </location>
    <ligand>
        <name>NADPH</name>
        <dbReference type="ChEBI" id="CHEBI:57783"/>
    </ligand>
</feature>
<feature type="binding site" evidence="1">
    <location>
        <position position="237"/>
    </location>
    <ligand>
        <name>NADPH</name>
        <dbReference type="ChEBI" id="CHEBI:57783"/>
    </ligand>
</feature>
<feature type="binding site" evidence="1">
    <location>
        <position position="238"/>
    </location>
    <ligand>
        <name>NADPH</name>
        <dbReference type="ChEBI" id="CHEBI:57783"/>
    </ligand>
</feature>
<feature type="binding site" evidence="1">
    <location>
        <position position="239"/>
    </location>
    <ligand>
        <name>NADPH</name>
        <dbReference type="ChEBI" id="CHEBI:57783"/>
    </ligand>
</feature>
<feature type="binding site" evidence="1">
    <location>
        <position position="243"/>
    </location>
    <ligand>
        <name>NADPH</name>
        <dbReference type="ChEBI" id="CHEBI:57783"/>
    </ligand>
</feature>
<feature type="binding site" evidence="1">
    <location>
        <position position="246"/>
    </location>
    <ligand>
        <name>NADPH</name>
        <dbReference type="ChEBI" id="CHEBI:57783"/>
    </ligand>
</feature>
<feature type="binding site" evidence="1">
    <location>
        <position position="247"/>
    </location>
    <ligand>
        <name>NADPH</name>
        <dbReference type="ChEBI" id="CHEBI:57783"/>
    </ligand>
</feature>
<feature type="binding site" evidence="1">
    <location>
        <position position="273"/>
    </location>
    <ligand>
        <name>NADPH</name>
        <dbReference type="ChEBI" id="CHEBI:57783"/>
    </ligand>
</feature>
<evidence type="ECO:0000250" key="1">
    <source>
        <dbReference type="UniProtKB" id="A0QV09"/>
    </source>
</evidence>
<evidence type="ECO:0000250" key="2">
    <source>
        <dbReference type="UniProtKB" id="P80874"/>
    </source>
</evidence>
<evidence type="ECO:0000305" key="3"/>
<protein>
    <recommendedName>
        <fullName evidence="1">Aldo-keto reductase MT3049</fullName>
        <ecNumber evidence="1">1.1.1.-</ecNumber>
    </recommendedName>
</protein>
<dbReference type="EC" id="1.1.1.-" evidence="1"/>
<dbReference type="EMBL" id="AE000516">
    <property type="protein sequence ID" value="AAK47375.1"/>
    <property type="molecule type" value="Genomic_DNA"/>
</dbReference>
<dbReference type="PIR" id="H70671">
    <property type="entry name" value="H70671"/>
</dbReference>
<dbReference type="RefSeq" id="WP_003899563.1">
    <property type="nucleotide sequence ID" value="NZ_KK341227.1"/>
</dbReference>
<dbReference type="SMR" id="P9WQA4"/>
<dbReference type="KEGG" id="mtc:MT3049"/>
<dbReference type="PATRIC" id="fig|83331.31.peg.3291"/>
<dbReference type="HOGENOM" id="CLU_023205_0_1_11"/>
<dbReference type="Proteomes" id="UP000001020">
    <property type="component" value="Chromosome"/>
</dbReference>
<dbReference type="GO" id="GO:0004033">
    <property type="term" value="F:aldo-keto reductase (NADPH) activity"/>
    <property type="evidence" value="ECO:0007669"/>
    <property type="project" value="TreeGrafter"/>
</dbReference>
<dbReference type="CDD" id="cd19134">
    <property type="entry name" value="AKR_AKR5H1"/>
    <property type="match status" value="1"/>
</dbReference>
<dbReference type="FunFam" id="3.20.20.100:FF:000002">
    <property type="entry name" value="2,5-diketo-D-gluconic acid reductase A"/>
    <property type="match status" value="1"/>
</dbReference>
<dbReference type="Gene3D" id="3.20.20.100">
    <property type="entry name" value="NADP-dependent oxidoreductase domain"/>
    <property type="match status" value="1"/>
</dbReference>
<dbReference type="InterPro" id="IPR020471">
    <property type="entry name" value="AKR"/>
</dbReference>
<dbReference type="InterPro" id="IPR018170">
    <property type="entry name" value="Aldo/ket_reductase_CS"/>
</dbReference>
<dbReference type="InterPro" id="IPR023210">
    <property type="entry name" value="NADP_OxRdtase_dom"/>
</dbReference>
<dbReference type="InterPro" id="IPR036812">
    <property type="entry name" value="NADP_OxRdtase_dom_sf"/>
</dbReference>
<dbReference type="PANTHER" id="PTHR43827">
    <property type="entry name" value="2,5-DIKETO-D-GLUCONIC ACID REDUCTASE"/>
    <property type="match status" value="1"/>
</dbReference>
<dbReference type="PANTHER" id="PTHR43827:SF3">
    <property type="entry name" value="NADP-DEPENDENT OXIDOREDUCTASE DOMAIN-CONTAINING PROTEIN"/>
    <property type="match status" value="1"/>
</dbReference>
<dbReference type="Pfam" id="PF00248">
    <property type="entry name" value="Aldo_ket_red"/>
    <property type="match status" value="1"/>
</dbReference>
<dbReference type="PIRSF" id="PIRSF000097">
    <property type="entry name" value="AKR"/>
    <property type="match status" value="1"/>
</dbReference>
<dbReference type="PRINTS" id="PR00069">
    <property type="entry name" value="ALDKETRDTASE"/>
</dbReference>
<dbReference type="SUPFAM" id="SSF51430">
    <property type="entry name" value="NAD(P)-linked oxidoreductase"/>
    <property type="match status" value="1"/>
</dbReference>
<dbReference type="PROSITE" id="PS00062">
    <property type="entry name" value="ALDOKETO_REDUCTASE_2"/>
    <property type="match status" value="1"/>
</dbReference>
<comment type="similarity">
    <text evidence="3">Belongs to the aldo/keto reductase family.</text>
</comment>
<proteinExistence type="inferred from homology"/>
<keyword id="KW-0521">NADP</keyword>
<keyword id="KW-0560">Oxidoreductase</keyword>
<keyword id="KW-1185">Reference proteome</keyword>
<accession>P9WQA4</accession>
<accession>L0TBF0</accession>
<accession>P95124</accession>
<accession>Q7D6C1</accession>
<reference key="1">
    <citation type="journal article" date="2002" name="J. Bacteriol.">
        <title>Whole-genome comparison of Mycobacterium tuberculosis clinical and laboratory strains.</title>
        <authorList>
            <person name="Fleischmann R.D."/>
            <person name="Alland D."/>
            <person name="Eisen J.A."/>
            <person name="Carpenter L."/>
            <person name="White O."/>
            <person name="Peterson J.D."/>
            <person name="DeBoy R.T."/>
            <person name="Dodson R.J."/>
            <person name="Gwinn M.L."/>
            <person name="Haft D.H."/>
            <person name="Hickey E.K."/>
            <person name="Kolonay J.F."/>
            <person name="Nelson W.C."/>
            <person name="Umayam L.A."/>
            <person name="Ermolaeva M.D."/>
            <person name="Salzberg S.L."/>
            <person name="Delcher A."/>
            <person name="Utterback T.R."/>
            <person name="Weidman J.F."/>
            <person name="Khouri H.M."/>
            <person name="Gill J."/>
            <person name="Mikula A."/>
            <person name="Bishai W."/>
            <person name="Jacobs W.R. Jr."/>
            <person name="Venter J.C."/>
            <person name="Fraser C.M."/>
        </authorList>
    </citation>
    <scope>NUCLEOTIDE SEQUENCE [LARGE SCALE GENOMIC DNA]</scope>
    <source>
        <strain>CDC 1551 / Oshkosh</strain>
    </source>
</reference>
<gene>
    <name type="ordered locus">MT3049</name>
</gene>
<sequence>MTGESGAAAAPSITLNDEHTMPVLGLGVAELSDDETERAVSAALEIGCRLIDTAYAYGNEAAVGRAIAASGVAREELFVTTKLATPDQGFTRSQEACRASLDRLGLDYVDLYLIHWPAPPVGKYVDAWGGMIQSRGEGHARSIGVSNFTAENIENLIDLTFVTPAVNQIELHPLLNQDELRKANAQHTVVTQSYCPLALGRLLDNPTVTSIASEYVKTPAQVLLRWNLQLGNAVVVRSARPERIASNFDVFDFELAAEHMDALGGLNDGTRVREDPLTYAGT</sequence>
<name>Y2971_MYCTO</name>